<keyword id="KW-0004">4Fe-4S</keyword>
<keyword id="KW-0408">Iron</keyword>
<keyword id="KW-0411">Iron-sulfur</keyword>
<keyword id="KW-0456">Lyase</keyword>
<keyword id="KW-0479">Metal-binding</keyword>
<keyword id="KW-0949">S-adenosyl-L-methionine</keyword>
<keyword id="KW-0784">Thiamine biosynthesis</keyword>
<keyword id="KW-0862">Zinc</keyword>
<accession>B0KL24</accession>
<protein>
    <recommendedName>
        <fullName evidence="1">Phosphomethylpyrimidine synthase</fullName>
        <ecNumber evidence="1">4.1.99.17</ecNumber>
    </recommendedName>
    <alternativeName>
        <fullName evidence="1">Hydroxymethylpyrimidine phosphate synthase</fullName>
        <shortName evidence="1">HMP-P synthase</shortName>
        <shortName evidence="1">HMP-phosphate synthase</shortName>
        <shortName evidence="1">HMPP synthase</shortName>
    </alternativeName>
    <alternativeName>
        <fullName evidence="1">Thiamine biosynthesis protein ThiC</fullName>
    </alternativeName>
</protein>
<reference key="1">
    <citation type="submission" date="2008-01" db="EMBL/GenBank/DDBJ databases">
        <title>Complete sequence of Pseudomonas putida GB-1.</title>
        <authorList>
            <consortium name="US DOE Joint Genome Institute"/>
            <person name="Copeland A."/>
            <person name="Lucas S."/>
            <person name="Lapidus A."/>
            <person name="Barry K."/>
            <person name="Glavina del Rio T."/>
            <person name="Dalin E."/>
            <person name="Tice H."/>
            <person name="Pitluck S."/>
            <person name="Bruce D."/>
            <person name="Goodwin L."/>
            <person name="Chertkov O."/>
            <person name="Brettin T."/>
            <person name="Detter J.C."/>
            <person name="Han C."/>
            <person name="Kuske C.R."/>
            <person name="Schmutz J."/>
            <person name="Larimer F."/>
            <person name="Land M."/>
            <person name="Hauser L."/>
            <person name="Kyrpides N."/>
            <person name="Kim E."/>
            <person name="McCarthy J.K."/>
            <person name="Richardson P."/>
        </authorList>
    </citation>
    <scope>NUCLEOTIDE SEQUENCE [LARGE SCALE GENOMIC DNA]</scope>
    <source>
        <strain>GB-1</strain>
    </source>
</reference>
<dbReference type="EC" id="4.1.99.17" evidence="1"/>
<dbReference type="EMBL" id="CP000926">
    <property type="protein sequence ID" value="ABZ00860.1"/>
    <property type="molecule type" value="Genomic_DNA"/>
</dbReference>
<dbReference type="RefSeq" id="WP_012274486.1">
    <property type="nucleotide sequence ID" value="NC_010322.1"/>
</dbReference>
<dbReference type="SMR" id="B0KL24"/>
<dbReference type="KEGG" id="ppg:PputGB1_4975"/>
<dbReference type="eggNOG" id="COG0422">
    <property type="taxonomic scope" value="Bacteria"/>
</dbReference>
<dbReference type="HOGENOM" id="CLU_013181_2_1_6"/>
<dbReference type="UniPathway" id="UPA00060"/>
<dbReference type="Proteomes" id="UP000002157">
    <property type="component" value="Chromosome"/>
</dbReference>
<dbReference type="GO" id="GO:0005829">
    <property type="term" value="C:cytosol"/>
    <property type="evidence" value="ECO:0007669"/>
    <property type="project" value="TreeGrafter"/>
</dbReference>
<dbReference type="GO" id="GO:0051539">
    <property type="term" value="F:4 iron, 4 sulfur cluster binding"/>
    <property type="evidence" value="ECO:0007669"/>
    <property type="project" value="UniProtKB-KW"/>
</dbReference>
<dbReference type="GO" id="GO:0016830">
    <property type="term" value="F:carbon-carbon lyase activity"/>
    <property type="evidence" value="ECO:0007669"/>
    <property type="project" value="InterPro"/>
</dbReference>
<dbReference type="GO" id="GO:0008270">
    <property type="term" value="F:zinc ion binding"/>
    <property type="evidence" value="ECO:0007669"/>
    <property type="project" value="UniProtKB-UniRule"/>
</dbReference>
<dbReference type="GO" id="GO:0009228">
    <property type="term" value="P:thiamine biosynthetic process"/>
    <property type="evidence" value="ECO:0007669"/>
    <property type="project" value="UniProtKB-KW"/>
</dbReference>
<dbReference type="GO" id="GO:0009229">
    <property type="term" value="P:thiamine diphosphate biosynthetic process"/>
    <property type="evidence" value="ECO:0007669"/>
    <property type="project" value="UniProtKB-UniRule"/>
</dbReference>
<dbReference type="FunFam" id="3.20.20.540:FF:000001">
    <property type="entry name" value="Phosphomethylpyrimidine synthase"/>
    <property type="match status" value="1"/>
</dbReference>
<dbReference type="Gene3D" id="6.10.250.620">
    <property type="match status" value="1"/>
</dbReference>
<dbReference type="Gene3D" id="3.20.20.540">
    <property type="entry name" value="Radical SAM ThiC family, central domain"/>
    <property type="match status" value="1"/>
</dbReference>
<dbReference type="HAMAP" id="MF_00089">
    <property type="entry name" value="ThiC"/>
    <property type="match status" value="1"/>
</dbReference>
<dbReference type="InterPro" id="IPR037509">
    <property type="entry name" value="ThiC"/>
</dbReference>
<dbReference type="InterPro" id="IPR025747">
    <property type="entry name" value="ThiC-associated_dom"/>
</dbReference>
<dbReference type="InterPro" id="IPR038521">
    <property type="entry name" value="ThiC/Bza_core_dom"/>
</dbReference>
<dbReference type="InterPro" id="IPR002817">
    <property type="entry name" value="ThiC/BzaA/B"/>
</dbReference>
<dbReference type="NCBIfam" id="NF006763">
    <property type="entry name" value="PRK09284.1"/>
    <property type="match status" value="1"/>
</dbReference>
<dbReference type="NCBIfam" id="NF009895">
    <property type="entry name" value="PRK13352.1"/>
    <property type="match status" value="1"/>
</dbReference>
<dbReference type="NCBIfam" id="TIGR00190">
    <property type="entry name" value="thiC"/>
    <property type="match status" value="1"/>
</dbReference>
<dbReference type="PANTHER" id="PTHR30557:SF1">
    <property type="entry name" value="PHOSPHOMETHYLPYRIMIDINE SYNTHASE, CHLOROPLASTIC"/>
    <property type="match status" value="1"/>
</dbReference>
<dbReference type="PANTHER" id="PTHR30557">
    <property type="entry name" value="THIAMINE BIOSYNTHESIS PROTEIN THIC"/>
    <property type="match status" value="1"/>
</dbReference>
<dbReference type="Pfam" id="PF13667">
    <property type="entry name" value="ThiC-associated"/>
    <property type="match status" value="1"/>
</dbReference>
<dbReference type="Pfam" id="PF01964">
    <property type="entry name" value="ThiC_Rad_SAM"/>
    <property type="match status" value="1"/>
</dbReference>
<dbReference type="SFLD" id="SFLDF00407">
    <property type="entry name" value="phosphomethylpyrimidine_syntha"/>
    <property type="match status" value="1"/>
</dbReference>
<dbReference type="SFLD" id="SFLDG01114">
    <property type="entry name" value="phosphomethylpyrimidine_syntha"/>
    <property type="match status" value="1"/>
</dbReference>
<dbReference type="SFLD" id="SFLDS00113">
    <property type="entry name" value="Radical_SAM_Phosphomethylpyrim"/>
    <property type="match status" value="1"/>
</dbReference>
<feature type="chain" id="PRO_1000075442" description="Phosphomethylpyrimidine synthase">
    <location>
        <begin position="1"/>
        <end position="626"/>
    </location>
</feature>
<feature type="region of interest" description="Disordered" evidence="2">
    <location>
        <begin position="1"/>
        <end position="22"/>
    </location>
</feature>
<feature type="compositionally biased region" description="Polar residues" evidence="2">
    <location>
        <begin position="10"/>
        <end position="22"/>
    </location>
</feature>
<feature type="binding site" evidence="1">
    <location>
        <position position="232"/>
    </location>
    <ligand>
        <name>substrate</name>
    </ligand>
</feature>
<feature type="binding site" evidence="1">
    <location>
        <position position="261"/>
    </location>
    <ligand>
        <name>substrate</name>
    </ligand>
</feature>
<feature type="binding site" evidence="1">
    <location>
        <position position="290"/>
    </location>
    <ligand>
        <name>substrate</name>
    </ligand>
</feature>
<feature type="binding site" evidence="1">
    <location>
        <position position="326"/>
    </location>
    <ligand>
        <name>substrate</name>
    </ligand>
</feature>
<feature type="binding site" evidence="1">
    <location>
        <begin position="346"/>
        <end position="348"/>
    </location>
    <ligand>
        <name>substrate</name>
    </ligand>
</feature>
<feature type="binding site" evidence="1">
    <location>
        <begin position="387"/>
        <end position="390"/>
    </location>
    <ligand>
        <name>substrate</name>
    </ligand>
</feature>
<feature type="binding site" evidence="1">
    <location>
        <position position="426"/>
    </location>
    <ligand>
        <name>substrate</name>
    </ligand>
</feature>
<feature type="binding site" evidence="1">
    <location>
        <position position="430"/>
    </location>
    <ligand>
        <name>Zn(2+)</name>
        <dbReference type="ChEBI" id="CHEBI:29105"/>
    </ligand>
</feature>
<feature type="binding site" evidence="1">
    <location>
        <position position="453"/>
    </location>
    <ligand>
        <name>substrate</name>
    </ligand>
</feature>
<feature type="binding site" evidence="1">
    <location>
        <position position="494"/>
    </location>
    <ligand>
        <name>Zn(2+)</name>
        <dbReference type="ChEBI" id="CHEBI:29105"/>
    </ligand>
</feature>
<feature type="binding site" evidence="1">
    <location>
        <position position="574"/>
    </location>
    <ligand>
        <name>[4Fe-4S] cluster</name>
        <dbReference type="ChEBI" id="CHEBI:49883"/>
        <note>4Fe-4S-S-AdoMet</note>
    </ligand>
</feature>
<feature type="binding site" evidence="1">
    <location>
        <position position="577"/>
    </location>
    <ligand>
        <name>[4Fe-4S] cluster</name>
        <dbReference type="ChEBI" id="CHEBI:49883"/>
        <note>4Fe-4S-S-AdoMet</note>
    </ligand>
</feature>
<feature type="binding site" evidence="1">
    <location>
        <position position="582"/>
    </location>
    <ligand>
        <name>[4Fe-4S] cluster</name>
        <dbReference type="ChEBI" id="CHEBI:49883"/>
        <note>4Fe-4S-S-AdoMet</note>
    </ligand>
</feature>
<name>THIC_PSEPG</name>
<evidence type="ECO:0000255" key="1">
    <source>
        <dbReference type="HAMAP-Rule" id="MF_00089"/>
    </source>
</evidence>
<evidence type="ECO:0000256" key="2">
    <source>
        <dbReference type="SAM" id="MobiDB-lite"/>
    </source>
</evidence>
<gene>
    <name evidence="1" type="primary">thiC</name>
    <name type="ordered locus">PputGB1_4975</name>
</gene>
<organism>
    <name type="scientific">Pseudomonas putida (strain GB-1)</name>
    <dbReference type="NCBI Taxonomy" id="76869"/>
    <lineage>
        <taxon>Bacteria</taxon>
        <taxon>Pseudomonadati</taxon>
        <taxon>Pseudomonadota</taxon>
        <taxon>Gammaproteobacteria</taxon>
        <taxon>Pseudomonadales</taxon>
        <taxon>Pseudomonadaceae</taxon>
        <taxon>Pseudomonas</taxon>
    </lineage>
</organism>
<comment type="function">
    <text evidence="1">Catalyzes the synthesis of the hydroxymethylpyrimidine phosphate (HMP-P) moiety of thiamine from aminoimidazole ribotide (AIR) in a radical S-adenosyl-L-methionine (SAM)-dependent reaction.</text>
</comment>
<comment type="catalytic activity">
    <reaction evidence="1">
        <text>5-amino-1-(5-phospho-beta-D-ribosyl)imidazole + S-adenosyl-L-methionine = 4-amino-2-methyl-5-(phosphooxymethyl)pyrimidine + CO + 5'-deoxyadenosine + formate + L-methionine + 3 H(+)</text>
        <dbReference type="Rhea" id="RHEA:24840"/>
        <dbReference type="ChEBI" id="CHEBI:15378"/>
        <dbReference type="ChEBI" id="CHEBI:15740"/>
        <dbReference type="ChEBI" id="CHEBI:17245"/>
        <dbReference type="ChEBI" id="CHEBI:17319"/>
        <dbReference type="ChEBI" id="CHEBI:57844"/>
        <dbReference type="ChEBI" id="CHEBI:58354"/>
        <dbReference type="ChEBI" id="CHEBI:59789"/>
        <dbReference type="ChEBI" id="CHEBI:137981"/>
        <dbReference type="EC" id="4.1.99.17"/>
    </reaction>
</comment>
<comment type="cofactor">
    <cofactor evidence="1">
        <name>[4Fe-4S] cluster</name>
        <dbReference type="ChEBI" id="CHEBI:49883"/>
    </cofactor>
    <text evidence="1">Binds 1 [4Fe-4S] cluster per subunit. The cluster is coordinated with 3 cysteines and an exchangeable S-adenosyl-L-methionine.</text>
</comment>
<comment type="pathway">
    <text evidence="1">Cofactor biosynthesis; thiamine diphosphate biosynthesis.</text>
</comment>
<comment type="subunit">
    <text evidence="1">Homodimer.</text>
</comment>
<comment type="similarity">
    <text evidence="1">Belongs to the ThiC family.</text>
</comment>
<sequence>MTKQEKAINLSESAQVDQQSVQPFPRSRKVYVEGSRPDIRVPMREISLDDTPTDFGGETNAPVLVYDTSGPYTDPNVIIDVRKGLADVRSAWIDARGDTERLDGLSSDFGQQRLNDAELAKLRFAHVRNPRRAKAGANVSQMHYARRGIITAEMEYVAIRENMKLQEARAAGLLKEQHAGHSFGANIPKEITPEFVRQEIARGRAIIPANINHPEVEPMIIGRNFLVKINGNIGNSALGSSIEEEVAKLTWGIRWGSDTVMDLSTGKHIHETREWIIRNSPVPIGTVPIYQALEKVNGVAEDLIWELFRDTLIEQAEQGVDYFTIHAGVLLRYVPLTAKRVTGIVSRGGSIMAKWCLAHHKENFLYTHFDEICEIMKAYDVSFSLGDGLRPGSIADANDAAQFGELETLGELTKIAWKHDVQCMIEGPGHVPMQLIKENMDKQLECCDEAPFYTLGPLTTDIAPGYDHITSGIGAAMIGWFGCAMLCYVTPKEHLGLPNKDDVKTGIITYKIAAHAADLAKGHPGAQIRDNALSKARFEFRWEDQFNLGLDPDTARAFHDETLPKESAKVAHFCSMCGPKFCSMKITQEVREYAAKIEAVDVTVEEGMREQAERFRQEGSQLYHKV</sequence>
<proteinExistence type="inferred from homology"/>